<gene>
    <name type="primary">ADH1</name>
</gene>
<organism>
    <name type="scientific">Oryctolagus cuniculus</name>
    <name type="common">Rabbit</name>
    <dbReference type="NCBI Taxonomy" id="9986"/>
    <lineage>
        <taxon>Eukaryota</taxon>
        <taxon>Metazoa</taxon>
        <taxon>Chordata</taxon>
        <taxon>Craniata</taxon>
        <taxon>Vertebrata</taxon>
        <taxon>Euteleostomi</taxon>
        <taxon>Mammalia</taxon>
        <taxon>Eutheria</taxon>
        <taxon>Euarchontoglires</taxon>
        <taxon>Glires</taxon>
        <taxon>Lagomorpha</taxon>
        <taxon>Leporidae</taxon>
        <taxon>Oryctolagus</taxon>
    </lineage>
</organism>
<accession>Q03505</accession>
<reference key="1">
    <citation type="journal article" date="1993" name="Eur. J. Biochem.">
        <title>Isozyme developments in mammalian class-I alcohol dehydrogenase. cDNA cloning, functional correlations, and lack of evidence for genetic isozymes in rabbit.</title>
        <authorList>
            <person name="Hoeoeg J.-O."/>
            <person name="Vagelopoulos N."/>
            <person name="Yip P.-K."/>
            <person name="Keung W.M."/>
            <person name="Joernvall H."/>
        </authorList>
    </citation>
    <scope>NUCLEOTIDE SEQUENCE [MRNA]</scope>
    <scope>PARTIAL PROTEIN SEQUENCE</scope>
    <source>
        <tissue>Liver</tissue>
    </source>
</reference>
<dbReference type="EC" id="1.1.1.1"/>
<dbReference type="EMBL" id="X69799">
    <property type="protein sequence ID" value="CAA49458.1"/>
    <property type="molecule type" value="mRNA"/>
</dbReference>
<dbReference type="PIR" id="S30353">
    <property type="entry name" value="S29343"/>
</dbReference>
<dbReference type="RefSeq" id="NP_001095174.1">
    <property type="nucleotide sequence ID" value="NM_001101704.1"/>
</dbReference>
<dbReference type="SMR" id="Q03505"/>
<dbReference type="FunCoup" id="Q03505">
    <property type="interactions" value="29"/>
</dbReference>
<dbReference type="PaxDb" id="9986-ENSOCUP00000024666"/>
<dbReference type="Ensembl" id="ENSOCUT00000030164.1">
    <property type="protein sequence ID" value="ENSOCUP00000024666.1"/>
    <property type="gene ID" value="ENSOCUG00000033073.1"/>
</dbReference>
<dbReference type="GeneID" id="100009283"/>
<dbReference type="KEGG" id="ocu:100009283"/>
<dbReference type="CTD" id="124"/>
<dbReference type="eggNOG" id="KOG0022">
    <property type="taxonomic scope" value="Eukaryota"/>
</dbReference>
<dbReference type="GeneTree" id="ENSGT00940000163645"/>
<dbReference type="HOGENOM" id="CLU_026673_14_0_1"/>
<dbReference type="InParanoid" id="Q03505"/>
<dbReference type="OMA" id="YIFAVEP"/>
<dbReference type="OrthoDB" id="417550at2759"/>
<dbReference type="TreeFam" id="TF300429"/>
<dbReference type="Proteomes" id="UP000001811">
    <property type="component" value="Chromosome 15"/>
</dbReference>
<dbReference type="Bgee" id="ENSOCUG00000033073">
    <property type="expression patterns" value="Expressed in liver and 16 other cell types or tissues"/>
</dbReference>
<dbReference type="ExpressionAtlas" id="Q03505">
    <property type="expression patterns" value="baseline"/>
</dbReference>
<dbReference type="GO" id="GO:0005829">
    <property type="term" value="C:cytosol"/>
    <property type="evidence" value="ECO:0007669"/>
    <property type="project" value="TreeGrafter"/>
</dbReference>
<dbReference type="GO" id="GO:0004745">
    <property type="term" value="F:all-trans-retinol dehydrogenase (NAD+) activity"/>
    <property type="evidence" value="ECO:0007669"/>
    <property type="project" value="TreeGrafter"/>
</dbReference>
<dbReference type="GO" id="GO:0008270">
    <property type="term" value="F:zinc ion binding"/>
    <property type="evidence" value="ECO:0007669"/>
    <property type="project" value="InterPro"/>
</dbReference>
<dbReference type="GO" id="GO:0042573">
    <property type="term" value="P:retinoic acid metabolic process"/>
    <property type="evidence" value="ECO:0007669"/>
    <property type="project" value="TreeGrafter"/>
</dbReference>
<dbReference type="GO" id="GO:0042572">
    <property type="term" value="P:retinol metabolic process"/>
    <property type="evidence" value="ECO:0007669"/>
    <property type="project" value="TreeGrafter"/>
</dbReference>
<dbReference type="CDD" id="cd08299">
    <property type="entry name" value="alcohol_DH_class_I_II_IV"/>
    <property type="match status" value="1"/>
</dbReference>
<dbReference type="FunFam" id="3.40.50.720:FF:000003">
    <property type="entry name" value="S-(hydroxymethyl)glutathione dehydrogenase"/>
    <property type="match status" value="1"/>
</dbReference>
<dbReference type="FunFam" id="3.90.180.10:FF:000001">
    <property type="entry name" value="S-(hydroxymethyl)glutathione dehydrogenase"/>
    <property type="match status" value="1"/>
</dbReference>
<dbReference type="Gene3D" id="3.90.180.10">
    <property type="entry name" value="Medium-chain alcohol dehydrogenases, catalytic domain"/>
    <property type="match status" value="1"/>
</dbReference>
<dbReference type="Gene3D" id="3.40.50.720">
    <property type="entry name" value="NAD(P)-binding Rossmann-like Domain"/>
    <property type="match status" value="1"/>
</dbReference>
<dbReference type="InterPro" id="IPR013149">
    <property type="entry name" value="ADH-like_C"/>
</dbReference>
<dbReference type="InterPro" id="IPR013154">
    <property type="entry name" value="ADH-like_N"/>
</dbReference>
<dbReference type="InterPro" id="IPR002328">
    <property type="entry name" value="ADH_Zn_CS"/>
</dbReference>
<dbReference type="InterPro" id="IPR011032">
    <property type="entry name" value="GroES-like_sf"/>
</dbReference>
<dbReference type="InterPro" id="IPR036291">
    <property type="entry name" value="NAD(P)-bd_dom_sf"/>
</dbReference>
<dbReference type="InterPro" id="IPR020843">
    <property type="entry name" value="PKS_ER"/>
</dbReference>
<dbReference type="PANTHER" id="PTHR43880">
    <property type="entry name" value="ALCOHOL DEHYDROGENASE"/>
    <property type="match status" value="1"/>
</dbReference>
<dbReference type="PANTHER" id="PTHR43880:SF1">
    <property type="entry name" value="ALCOHOL DEHYDROGENASE 1A"/>
    <property type="match status" value="1"/>
</dbReference>
<dbReference type="Pfam" id="PF08240">
    <property type="entry name" value="ADH_N"/>
    <property type="match status" value="1"/>
</dbReference>
<dbReference type="Pfam" id="PF00107">
    <property type="entry name" value="ADH_zinc_N"/>
    <property type="match status" value="1"/>
</dbReference>
<dbReference type="SMART" id="SM00829">
    <property type="entry name" value="PKS_ER"/>
    <property type="match status" value="1"/>
</dbReference>
<dbReference type="SUPFAM" id="SSF50129">
    <property type="entry name" value="GroES-like"/>
    <property type="match status" value="2"/>
</dbReference>
<dbReference type="SUPFAM" id="SSF51735">
    <property type="entry name" value="NAD(P)-binding Rossmann-fold domains"/>
    <property type="match status" value="1"/>
</dbReference>
<dbReference type="PROSITE" id="PS00059">
    <property type="entry name" value="ADH_ZINC"/>
    <property type="match status" value="1"/>
</dbReference>
<name>ADH1_RABIT</name>
<feature type="initiator methionine" description="Removed" evidence="3">
    <location>
        <position position="1"/>
    </location>
</feature>
<feature type="chain" id="PRO_0000160668" description="Alcohol dehydrogenase 1">
    <location>
        <begin position="2"/>
        <end position="375"/>
    </location>
</feature>
<feature type="binding site" evidence="1">
    <location>
        <position position="47"/>
    </location>
    <ligand>
        <name>Zn(2+)</name>
        <dbReference type="ChEBI" id="CHEBI:29105"/>
        <label>1</label>
        <note>catalytic</note>
    </ligand>
</feature>
<feature type="binding site" evidence="1">
    <location>
        <position position="68"/>
    </location>
    <ligand>
        <name>Zn(2+)</name>
        <dbReference type="ChEBI" id="CHEBI:29105"/>
        <label>1</label>
        <note>catalytic</note>
    </ligand>
</feature>
<feature type="binding site" evidence="1">
    <location>
        <position position="98"/>
    </location>
    <ligand>
        <name>Zn(2+)</name>
        <dbReference type="ChEBI" id="CHEBI:29105"/>
        <label>2</label>
    </ligand>
</feature>
<feature type="binding site" evidence="1">
    <location>
        <position position="101"/>
    </location>
    <ligand>
        <name>Zn(2+)</name>
        <dbReference type="ChEBI" id="CHEBI:29105"/>
        <label>2</label>
    </ligand>
</feature>
<feature type="binding site" evidence="1">
    <location>
        <position position="104"/>
    </location>
    <ligand>
        <name>Zn(2+)</name>
        <dbReference type="ChEBI" id="CHEBI:29105"/>
        <label>2</label>
    </ligand>
</feature>
<feature type="binding site" evidence="1">
    <location>
        <position position="112"/>
    </location>
    <ligand>
        <name>Zn(2+)</name>
        <dbReference type="ChEBI" id="CHEBI:29105"/>
        <label>2</label>
    </ligand>
</feature>
<feature type="binding site" evidence="1">
    <location>
        <position position="175"/>
    </location>
    <ligand>
        <name>Zn(2+)</name>
        <dbReference type="ChEBI" id="CHEBI:29105"/>
        <label>1</label>
        <note>catalytic</note>
    </ligand>
</feature>
<feature type="binding site" evidence="1">
    <location>
        <begin position="200"/>
        <end position="205"/>
    </location>
    <ligand>
        <name>NAD(+)</name>
        <dbReference type="ChEBI" id="CHEBI:57540"/>
    </ligand>
</feature>
<feature type="binding site" evidence="1">
    <location>
        <position position="224"/>
    </location>
    <ligand>
        <name>NAD(+)</name>
        <dbReference type="ChEBI" id="CHEBI:57540"/>
    </ligand>
</feature>
<feature type="binding site" evidence="1">
    <location>
        <position position="229"/>
    </location>
    <ligand>
        <name>NAD(+)</name>
        <dbReference type="ChEBI" id="CHEBI:57540"/>
    </ligand>
</feature>
<feature type="binding site" evidence="1">
    <location>
        <begin position="293"/>
        <end position="295"/>
    </location>
    <ligand>
        <name>NAD(+)</name>
        <dbReference type="ChEBI" id="CHEBI:57540"/>
    </ligand>
</feature>
<feature type="binding site" evidence="1">
    <location>
        <position position="370"/>
    </location>
    <ligand>
        <name>NAD(+)</name>
        <dbReference type="ChEBI" id="CHEBI:57540"/>
    </ligand>
</feature>
<feature type="modified residue" description="N-acetylserine" evidence="3">
    <location>
        <position position="2"/>
    </location>
</feature>
<feature type="modified residue" description="N6-succinyllysine" evidence="2">
    <location>
        <position position="234"/>
    </location>
</feature>
<feature type="modified residue" description="N6-succinyllysine" evidence="2">
    <location>
        <position position="340"/>
    </location>
</feature>
<proteinExistence type="evidence at protein level"/>
<comment type="catalytic activity">
    <reaction>
        <text>a primary alcohol + NAD(+) = an aldehyde + NADH + H(+)</text>
        <dbReference type="Rhea" id="RHEA:10736"/>
        <dbReference type="ChEBI" id="CHEBI:15378"/>
        <dbReference type="ChEBI" id="CHEBI:15734"/>
        <dbReference type="ChEBI" id="CHEBI:17478"/>
        <dbReference type="ChEBI" id="CHEBI:57540"/>
        <dbReference type="ChEBI" id="CHEBI:57945"/>
        <dbReference type="EC" id="1.1.1.1"/>
    </reaction>
</comment>
<comment type="catalytic activity">
    <reaction>
        <text>a secondary alcohol + NAD(+) = a ketone + NADH + H(+)</text>
        <dbReference type="Rhea" id="RHEA:10740"/>
        <dbReference type="ChEBI" id="CHEBI:15378"/>
        <dbReference type="ChEBI" id="CHEBI:17087"/>
        <dbReference type="ChEBI" id="CHEBI:35681"/>
        <dbReference type="ChEBI" id="CHEBI:57540"/>
        <dbReference type="ChEBI" id="CHEBI:57945"/>
        <dbReference type="EC" id="1.1.1.1"/>
    </reaction>
</comment>
<comment type="cofactor">
    <cofactor evidence="1">
        <name>Zn(2+)</name>
        <dbReference type="ChEBI" id="CHEBI:29105"/>
    </cofactor>
    <text evidence="1">Binds 2 Zn(2+) ions per subunit.</text>
</comment>
<comment type="subunit">
    <text>Homodimer.</text>
</comment>
<comment type="subcellular location">
    <subcellularLocation>
        <location>Cytoplasm</location>
    </subcellularLocation>
</comment>
<comment type="similarity">
    <text evidence="4">Belongs to the zinc-containing alcohol dehydrogenase family.</text>
</comment>
<sequence length="375" mass="39588">MSTAGKVIKCKAAVLWQLNKPFSIEEVEVAPPKAHEVRIKMVATGICRSDDHAVTGSIAVPLPVILGHEAAGIVESIGEGVTTVKPGDKVIPLFTPQCGKCRICKHPESNFCLINDLGKPKGMLLDGTSRFTCKGKPIHHFIGTSTFSQYTVVDEIAVAKIDAAAPLEKVCLIGCGFSTGYGSAVKVAKVTPGSTCAVFGLGGVGLSVIMGCKAAGASRIIAVDINKDKFPKAKEVGATECINPQDYKKPIQEVIQEISDGGVDFSFEVIGRLDTVVAALLSCHGACGTSVIVGVPPDSQSLTVNPMLLLSGRTWKGAIFGGFKSKDSVPKLVADFMAKKFSLDPLITNVLPFEKINEGFDLLRSGKSIRTILTF</sequence>
<protein>
    <recommendedName>
        <fullName>Alcohol dehydrogenase 1</fullName>
        <ecNumber>1.1.1.1</ecNumber>
    </recommendedName>
    <alternativeName>
        <fullName>Alcohol dehydrogenase subunit alpha</fullName>
    </alternativeName>
</protein>
<keyword id="KW-0007">Acetylation</keyword>
<keyword id="KW-0963">Cytoplasm</keyword>
<keyword id="KW-0903">Direct protein sequencing</keyword>
<keyword id="KW-0479">Metal-binding</keyword>
<keyword id="KW-0520">NAD</keyword>
<keyword id="KW-0560">Oxidoreductase</keyword>
<keyword id="KW-1185">Reference proteome</keyword>
<keyword id="KW-0862">Zinc</keyword>
<evidence type="ECO:0000250" key="1"/>
<evidence type="ECO:0000250" key="2">
    <source>
        <dbReference type="UniProtKB" id="P00329"/>
    </source>
</evidence>
<evidence type="ECO:0000250" key="3">
    <source>
        <dbReference type="UniProtKB" id="P06757"/>
    </source>
</evidence>
<evidence type="ECO:0000305" key="4"/>